<keyword id="KW-0217">Developmental protein</keyword>
<keyword id="KW-0238">DNA-binding</keyword>
<keyword id="KW-0539">Nucleus</keyword>
<keyword id="KW-0597">Phosphoprotein</keyword>
<keyword id="KW-1185">Reference proteome</keyword>
<keyword id="KW-0804">Transcription</keyword>
<keyword id="KW-0805">Transcription regulation</keyword>
<reference key="1">
    <citation type="journal article" date="1989" name="Cell">
        <title>The homeotic gene fork head encodes a nuclear protein and is expressed in the terminal regions of the Drosophila embryo.</title>
        <authorList>
            <person name="Weigel D."/>
            <person name="Juergens G."/>
            <person name="Kuettner F."/>
            <person name="Seifert E."/>
            <person name="Jaeckle H."/>
        </authorList>
    </citation>
    <scope>NUCLEOTIDE SEQUENCE [GENOMIC DNA]</scope>
</reference>
<reference key="2">
    <citation type="journal article" date="2000" name="Science">
        <title>The genome sequence of Drosophila melanogaster.</title>
        <authorList>
            <person name="Adams M.D."/>
            <person name="Celniker S.E."/>
            <person name="Holt R.A."/>
            <person name="Evans C.A."/>
            <person name="Gocayne J.D."/>
            <person name="Amanatides P.G."/>
            <person name="Scherer S.E."/>
            <person name="Li P.W."/>
            <person name="Hoskins R.A."/>
            <person name="Galle R.F."/>
            <person name="George R.A."/>
            <person name="Lewis S.E."/>
            <person name="Richards S."/>
            <person name="Ashburner M."/>
            <person name="Henderson S.N."/>
            <person name="Sutton G.G."/>
            <person name="Wortman J.R."/>
            <person name="Yandell M.D."/>
            <person name="Zhang Q."/>
            <person name="Chen L.X."/>
            <person name="Brandon R.C."/>
            <person name="Rogers Y.-H.C."/>
            <person name="Blazej R.G."/>
            <person name="Champe M."/>
            <person name="Pfeiffer B.D."/>
            <person name="Wan K.H."/>
            <person name="Doyle C."/>
            <person name="Baxter E.G."/>
            <person name="Helt G."/>
            <person name="Nelson C.R."/>
            <person name="Miklos G.L.G."/>
            <person name="Abril J.F."/>
            <person name="Agbayani A."/>
            <person name="An H.-J."/>
            <person name="Andrews-Pfannkoch C."/>
            <person name="Baldwin D."/>
            <person name="Ballew R.M."/>
            <person name="Basu A."/>
            <person name="Baxendale J."/>
            <person name="Bayraktaroglu L."/>
            <person name="Beasley E.M."/>
            <person name="Beeson K.Y."/>
            <person name="Benos P.V."/>
            <person name="Berman B.P."/>
            <person name="Bhandari D."/>
            <person name="Bolshakov S."/>
            <person name="Borkova D."/>
            <person name="Botchan M.R."/>
            <person name="Bouck J."/>
            <person name="Brokstein P."/>
            <person name="Brottier P."/>
            <person name="Burtis K.C."/>
            <person name="Busam D.A."/>
            <person name="Butler H."/>
            <person name="Cadieu E."/>
            <person name="Center A."/>
            <person name="Chandra I."/>
            <person name="Cherry J.M."/>
            <person name="Cawley S."/>
            <person name="Dahlke C."/>
            <person name="Davenport L.B."/>
            <person name="Davies P."/>
            <person name="de Pablos B."/>
            <person name="Delcher A."/>
            <person name="Deng Z."/>
            <person name="Mays A.D."/>
            <person name="Dew I."/>
            <person name="Dietz S.M."/>
            <person name="Dodson K."/>
            <person name="Doup L.E."/>
            <person name="Downes M."/>
            <person name="Dugan-Rocha S."/>
            <person name="Dunkov B.C."/>
            <person name="Dunn P."/>
            <person name="Durbin K.J."/>
            <person name="Evangelista C.C."/>
            <person name="Ferraz C."/>
            <person name="Ferriera S."/>
            <person name="Fleischmann W."/>
            <person name="Fosler C."/>
            <person name="Gabrielian A.E."/>
            <person name="Garg N.S."/>
            <person name="Gelbart W.M."/>
            <person name="Glasser K."/>
            <person name="Glodek A."/>
            <person name="Gong F."/>
            <person name="Gorrell J.H."/>
            <person name="Gu Z."/>
            <person name="Guan P."/>
            <person name="Harris M."/>
            <person name="Harris N.L."/>
            <person name="Harvey D.A."/>
            <person name="Heiman T.J."/>
            <person name="Hernandez J.R."/>
            <person name="Houck J."/>
            <person name="Hostin D."/>
            <person name="Houston K.A."/>
            <person name="Howland T.J."/>
            <person name="Wei M.-H."/>
            <person name="Ibegwam C."/>
            <person name="Jalali M."/>
            <person name="Kalush F."/>
            <person name="Karpen G.H."/>
            <person name="Ke Z."/>
            <person name="Kennison J.A."/>
            <person name="Ketchum K.A."/>
            <person name="Kimmel B.E."/>
            <person name="Kodira C.D."/>
            <person name="Kraft C.L."/>
            <person name="Kravitz S."/>
            <person name="Kulp D."/>
            <person name="Lai Z."/>
            <person name="Lasko P."/>
            <person name="Lei Y."/>
            <person name="Levitsky A.A."/>
            <person name="Li J.H."/>
            <person name="Li Z."/>
            <person name="Liang Y."/>
            <person name="Lin X."/>
            <person name="Liu X."/>
            <person name="Mattei B."/>
            <person name="McIntosh T.C."/>
            <person name="McLeod M.P."/>
            <person name="McPherson D."/>
            <person name="Merkulov G."/>
            <person name="Milshina N.V."/>
            <person name="Mobarry C."/>
            <person name="Morris J."/>
            <person name="Moshrefi A."/>
            <person name="Mount S.M."/>
            <person name="Moy M."/>
            <person name="Murphy B."/>
            <person name="Murphy L."/>
            <person name="Muzny D.M."/>
            <person name="Nelson D.L."/>
            <person name="Nelson D.R."/>
            <person name="Nelson K.A."/>
            <person name="Nixon K."/>
            <person name="Nusskern D.R."/>
            <person name="Pacleb J.M."/>
            <person name="Palazzolo M."/>
            <person name="Pittman G.S."/>
            <person name="Pan S."/>
            <person name="Pollard J."/>
            <person name="Puri V."/>
            <person name="Reese M.G."/>
            <person name="Reinert K."/>
            <person name="Remington K."/>
            <person name="Saunders R.D.C."/>
            <person name="Scheeler F."/>
            <person name="Shen H."/>
            <person name="Shue B.C."/>
            <person name="Siden-Kiamos I."/>
            <person name="Simpson M."/>
            <person name="Skupski M.P."/>
            <person name="Smith T.J."/>
            <person name="Spier E."/>
            <person name="Spradling A.C."/>
            <person name="Stapleton M."/>
            <person name="Strong R."/>
            <person name="Sun E."/>
            <person name="Svirskas R."/>
            <person name="Tector C."/>
            <person name="Turner R."/>
            <person name="Venter E."/>
            <person name="Wang A.H."/>
            <person name="Wang X."/>
            <person name="Wang Z.-Y."/>
            <person name="Wassarman D.A."/>
            <person name="Weinstock G.M."/>
            <person name="Weissenbach J."/>
            <person name="Williams S.M."/>
            <person name="Woodage T."/>
            <person name="Worley K.C."/>
            <person name="Wu D."/>
            <person name="Yang S."/>
            <person name="Yao Q.A."/>
            <person name="Ye J."/>
            <person name="Yeh R.-F."/>
            <person name="Zaveri J.S."/>
            <person name="Zhan M."/>
            <person name="Zhang G."/>
            <person name="Zhao Q."/>
            <person name="Zheng L."/>
            <person name="Zheng X.H."/>
            <person name="Zhong F.N."/>
            <person name="Zhong W."/>
            <person name="Zhou X."/>
            <person name="Zhu S.C."/>
            <person name="Zhu X."/>
            <person name="Smith H.O."/>
            <person name="Gibbs R.A."/>
            <person name="Myers E.W."/>
            <person name="Rubin G.M."/>
            <person name="Venter J.C."/>
        </authorList>
    </citation>
    <scope>NUCLEOTIDE SEQUENCE [LARGE SCALE GENOMIC DNA]</scope>
    <source>
        <strain>Berkeley</strain>
    </source>
</reference>
<reference key="3">
    <citation type="journal article" date="2002" name="Genome Biol.">
        <title>Annotation of the Drosophila melanogaster euchromatic genome: a systematic review.</title>
        <authorList>
            <person name="Misra S."/>
            <person name="Crosby M.A."/>
            <person name="Mungall C.J."/>
            <person name="Matthews B.B."/>
            <person name="Campbell K.S."/>
            <person name="Hradecky P."/>
            <person name="Huang Y."/>
            <person name="Kaminker J.S."/>
            <person name="Millburn G.H."/>
            <person name="Prochnik S.E."/>
            <person name="Smith C.D."/>
            <person name="Tupy J.L."/>
            <person name="Whitfield E.J."/>
            <person name="Bayraktaroglu L."/>
            <person name="Berman B.P."/>
            <person name="Bettencourt B.R."/>
            <person name="Celniker S.E."/>
            <person name="de Grey A.D.N.J."/>
            <person name="Drysdale R.A."/>
            <person name="Harris N.L."/>
            <person name="Richter J."/>
            <person name="Russo S."/>
            <person name="Schroeder A.J."/>
            <person name="Shu S.Q."/>
            <person name="Stapleton M."/>
            <person name="Yamada C."/>
            <person name="Ashburner M."/>
            <person name="Gelbart W.M."/>
            <person name="Rubin G.M."/>
            <person name="Lewis S.E."/>
        </authorList>
    </citation>
    <scope>GENOME REANNOTATION</scope>
    <source>
        <strain>Berkeley</strain>
    </source>
</reference>
<reference key="4">
    <citation type="journal article" date="2008" name="J. Proteome Res.">
        <title>Phosphoproteome analysis of Drosophila melanogaster embryos.</title>
        <authorList>
            <person name="Zhai B."/>
            <person name="Villen J."/>
            <person name="Beausoleil S.A."/>
            <person name="Mintseris J."/>
            <person name="Gygi S.P."/>
        </authorList>
    </citation>
    <scope>PHOSPHORYLATION [LARGE SCALE ANALYSIS] AT SER-187; SER-190; SER-320; SER-322 AND SER-330</scope>
    <scope>IDENTIFICATION BY MASS SPECTROMETRY</scope>
    <source>
        <tissue>Embryo</tissue>
    </source>
</reference>
<comment type="function">
    <text>Fkh promotes terminal as opposed to segmental development. In the absence of fkh, this developmental switch does not occur. The nuclear localization of the fkh protein suggest that fkh regulates the transcription of other, subordinate, genes.</text>
</comment>
<comment type="subcellular location">
    <subcellularLocation>
        <location>Nucleus</location>
    </subcellularLocation>
</comment>
<protein>
    <recommendedName>
        <fullName>Protein fork head</fullName>
    </recommendedName>
</protein>
<sequence length="510" mass="54286">MQKLYAEPPPSSAPVSMASSGGGGPPSGGGGGGGGGGGGGPPPPSNNNPNPTSNGGSMSPLARSAYTMNSMGLPVGGMSSVSPQAAATFSSSVLDSAAAVASMSASMSASMSASMNASMNGSMGAAAMNSMGGNCMTPSSMSYASMGSPLGNMGGCMAMSAASMSAAGLSGTYGAMPPGSREMETGSPNSLGRSRVDKPTTYRRSYTHAKPPYSYISLITMAIQNNPTRMLTLSEIYQFIMDLFPFYRQNQQRWQNSIRHSLSFNDCFVKIPRTPDKPGKGSFWTLHPDSGNMFENGCYLRRQKRFKDEKKEAIRQLHKSPSHSSLEATSPGKKDHEDSHHMHHHHHSRLDHHQHHKEAGGASIAGVNVLSAAHSKDAEALAMLHANAELCLSQQPQHVPTHHHHQHHQLQQEELSAMMANRCHPSLITDYHSSMHPLKQEPSGYTPSSHPFSINRLLPTESKADIKMYDMSQYAGYNALSPLTNSHAALGQDSYYQSLGYHAPAGTTSL</sequence>
<gene>
    <name type="primary">fkh</name>
    <name type="ORF">CG10002</name>
</gene>
<dbReference type="EMBL" id="J03177">
    <property type="protein sequence ID" value="AAA28535.1"/>
    <property type="molecule type" value="Genomic_DNA"/>
</dbReference>
<dbReference type="EMBL" id="AE014297">
    <property type="protein sequence ID" value="AAF56798.1"/>
    <property type="molecule type" value="Genomic_DNA"/>
</dbReference>
<dbReference type="PIR" id="A32380">
    <property type="entry name" value="A32380"/>
</dbReference>
<dbReference type="RefSeq" id="NP_001163762.1">
    <property type="nucleotide sequence ID" value="NM_001170291.1"/>
</dbReference>
<dbReference type="RefSeq" id="NP_001287574.1">
    <property type="nucleotide sequence ID" value="NM_001300645.1"/>
</dbReference>
<dbReference type="RefSeq" id="NP_524542.1">
    <property type="nucleotide sequence ID" value="NM_079818.3"/>
</dbReference>
<dbReference type="SMR" id="P14734"/>
<dbReference type="BioGRID" id="68259">
    <property type="interactions" value="24"/>
</dbReference>
<dbReference type="DIP" id="DIP-17045N"/>
<dbReference type="FunCoup" id="P14734">
    <property type="interactions" value="115"/>
</dbReference>
<dbReference type="IntAct" id="P14734">
    <property type="interactions" value="5"/>
</dbReference>
<dbReference type="STRING" id="7227.FBpp0303365"/>
<dbReference type="GlyGen" id="P14734">
    <property type="glycosylation" value="1 site"/>
</dbReference>
<dbReference type="iPTMnet" id="P14734"/>
<dbReference type="PaxDb" id="7227-FBpp0289487"/>
<dbReference type="EnsemblMetazoa" id="FBtr0085321">
    <property type="protein sequence ID" value="FBpp0084690"/>
    <property type="gene ID" value="FBgn0000659"/>
</dbReference>
<dbReference type="EnsemblMetazoa" id="FBtr0300259">
    <property type="protein sequence ID" value="FBpp0289487"/>
    <property type="gene ID" value="FBgn0000659"/>
</dbReference>
<dbReference type="EnsemblMetazoa" id="FBtr0345227">
    <property type="protein sequence ID" value="FBpp0311419"/>
    <property type="gene ID" value="FBgn0000659"/>
</dbReference>
<dbReference type="GeneID" id="43383"/>
<dbReference type="KEGG" id="dme:Dmel_CG10002"/>
<dbReference type="AGR" id="FB:FBgn0000659"/>
<dbReference type="CTD" id="43383"/>
<dbReference type="FlyBase" id="FBgn0000659">
    <property type="gene designation" value="fkh"/>
</dbReference>
<dbReference type="VEuPathDB" id="VectorBase:FBgn0000659"/>
<dbReference type="eggNOG" id="KOG3563">
    <property type="taxonomic scope" value="Eukaryota"/>
</dbReference>
<dbReference type="GeneTree" id="ENSGT00940000155999"/>
<dbReference type="HOGENOM" id="CLU_027910_4_1_1"/>
<dbReference type="InParanoid" id="P14734"/>
<dbReference type="OMA" id="VDQPPNN"/>
<dbReference type="OrthoDB" id="5954824at2759"/>
<dbReference type="PhylomeDB" id="P14734"/>
<dbReference type="Reactome" id="R-DME-9018519">
    <property type="pathway name" value="Estrogen-dependent gene expression"/>
</dbReference>
<dbReference type="SignaLink" id="P14734"/>
<dbReference type="BioGRID-ORCS" id="43383">
    <property type="hits" value="0 hits in 3 CRISPR screens"/>
</dbReference>
<dbReference type="GenomeRNAi" id="43383"/>
<dbReference type="PRO" id="PR:P14734"/>
<dbReference type="Proteomes" id="UP000000803">
    <property type="component" value="Chromosome 3R"/>
</dbReference>
<dbReference type="Bgee" id="FBgn0000659">
    <property type="expression patterns" value="Expressed in adult Malpighian tubule principal cell of lower ureter in Malpighian tubule and 176 other cell types or tissues"/>
</dbReference>
<dbReference type="ExpressionAtlas" id="P14734">
    <property type="expression patterns" value="baseline and differential"/>
</dbReference>
<dbReference type="GO" id="GO:0005634">
    <property type="term" value="C:nucleus"/>
    <property type="evidence" value="ECO:0000314"/>
    <property type="project" value="FlyBase"/>
</dbReference>
<dbReference type="GO" id="GO:0000981">
    <property type="term" value="F:DNA-binding transcription factor activity, RNA polymerase II-specific"/>
    <property type="evidence" value="ECO:0000314"/>
    <property type="project" value="FlyBase"/>
</dbReference>
<dbReference type="GO" id="GO:0019904">
    <property type="term" value="F:protein domain specific binding"/>
    <property type="evidence" value="ECO:0007669"/>
    <property type="project" value="InterPro"/>
</dbReference>
<dbReference type="GO" id="GO:0000978">
    <property type="term" value="F:RNA polymerase II cis-regulatory region sequence-specific DNA binding"/>
    <property type="evidence" value="ECO:0000318"/>
    <property type="project" value="GO_Central"/>
</dbReference>
<dbReference type="GO" id="GO:0000977">
    <property type="term" value="F:RNA polymerase II transcription regulatory region sequence-specific DNA binding"/>
    <property type="evidence" value="ECO:0000314"/>
    <property type="project" value="FlyBase"/>
</dbReference>
<dbReference type="GO" id="GO:0009653">
    <property type="term" value="P:anatomical structure morphogenesis"/>
    <property type="evidence" value="ECO:0000318"/>
    <property type="project" value="GO_Central"/>
</dbReference>
<dbReference type="GO" id="GO:0048102">
    <property type="term" value="P:autophagic cell death"/>
    <property type="evidence" value="ECO:0000314"/>
    <property type="project" value="FlyBase"/>
</dbReference>
<dbReference type="GO" id="GO:0030154">
    <property type="term" value="P:cell differentiation"/>
    <property type="evidence" value="ECO:0000318"/>
    <property type="project" value="GO_Central"/>
</dbReference>
<dbReference type="GO" id="GO:0008340">
    <property type="term" value="P:determination of adult lifespan"/>
    <property type="evidence" value="ECO:0000315"/>
    <property type="project" value="FlyBase"/>
</dbReference>
<dbReference type="GO" id="GO:0042023">
    <property type="term" value="P:DNA endoreduplication"/>
    <property type="evidence" value="ECO:0000315"/>
    <property type="project" value="FlyBase"/>
</dbReference>
<dbReference type="GO" id="GO:0001706">
    <property type="term" value="P:endoderm formation"/>
    <property type="evidence" value="ECO:0000304"/>
    <property type="project" value="FlyBase"/>
</dbReference>
<dbReference type="GO" id="GO:0008286">
    <property type="term" value="P:insulin receptor signaling pathway"/>
    <property type="evidence" value="ECO:0000314"/>
    <property type="project" value="FlyBase"/>
</dbReference>
<dbReference type="GO" id="GO:0007443">
    <property type="term" value="P:Malpighian tubule morphogenesis"/>
    <property type="evidence" value="ECO:0000315"/>
    <property type="project" value="FlyBase"/>
</dbReference>
<dbReference type="GO" id="GO:0043066">
    <property type="term" value="P:negative regulation of apoptotic process"/>
    <property type="evidence" value="ECO:0000315"/>
    <property type="project" value="FlyBase"/>
</dbReference>
<dbReference type="GO" id="GO:0030308">
    <property type="term" value="P:negative regulation of cell growth"/>
    <property type="evidence" value="ECO:0000315"/>
    <property type="project" value="FlyBase"/>
</dbReference>
<dbReference type="GO" id="GO:0040015">
    <property type="term" value="P:negative regulation of multicellular organism growth"/>
    <property type="evidence" value="ECO:0000315"/>
    <property type="project" value="FlyBase"/>
</dbReference>
<dbReference type="GO" id="GO:0043069">
    <property type="term" value="P:negative regulation of programmed cell death"/>
    <property type="evidence" value="ECO:0000314"/>
    <property type="project" value="FlyBase"/>
</dbReference>
<dbReference type="GO" id="GO:0000122">
    <property type="term" value="P:negative regulation of transcription by RNA polymerase II"/>
    <property type="evidence" value="ECO:0000304"/>
    <property type="project" value="FlyBase"/>
</dbReference>
<dbReference type="GO" id="GO:0061101">
    <property type="term" value="P:neuroendocrine cell differentiation"/>
    <property type="evidence" value="ECO:0000315"/>
    <property type="project" value="FlyBase"/>
</dbReference>
<dbReference type="GO" id="GO:0045944">
    <property type="term" value="P:positive regulation of transcription by RNA polymerase II"/>
    <property type="evidence" value="ECO:0000314"/>
    <property type="project" value="FlyBase"/>
</dbReference>
<dbReference type="GO" id="GO:0006357">
    <property type="term" value="P:regulation of transcription by RNA polymerase II"/>
    <property type="evidence" value="ECO:0000315"/>
    <property type="project" value="FlyBase"/>
</dbReference>
<dbReference type="GO" id="GO:0007431">
    <property type="term" value="P:salivary gland development"/>
    <property type="evidence" value="ECO:0000315"/>
    <property type="project" value="FlyBase"/>
</dbReference>
<dbReference type="GO" id="GO:0007435">
    <property type="term" value="P:salivary gland morphogenesis"/>
    <property type="evidence" value="ECO:0000315"/>
    <property type="project" value="FlyBase"/>
</dbReference>
<dbReference type="CDD" id="cd20041">
    <property type="entry name" value="FH_dFKH"/>
    <property type="match status" value="1"/>
</dbReference>
<dbReference type="FunFam" id="1.10.10.10:FF:000042">
    <property type="entry name" value="hepatocyte nuclear factor 3-beta"/>
    <property type="match status" value="1"/>
</dbReference>
<dbReference type="Gene3D" id="1.10.10.10">
    <property type="entry name" value="Winged helix-like DNA-binding domain superfamily/Winged helix DNA-binding domain"/>
    <property type="match status" value="1"/>
</dbReference>
<dbReference type="InterPro" id="IPR047388">
    <property type="entry name" value="FH-like_dFKH"/>
</dbReference>
<dbReference type="InterPro" id="IPR013638">
    <property type="entry name" value="Fork-head_N"/>
</dbReference>
<dbReference type="InterPro" id="IPR001766">
    <property type="entry name" value="Fork_head_dom"/>
</dbReference>
<dbReference type="InterPro" id="IPR050211">
    <property type="entry name" value="FOX_domain-containing"/>
</dbReference>
<dbReference type="InterPro" id="IPR018122">
    <property type="entry name" value="TF_fork_head_CS_1"/>
</dbReference>
<dbReference type="InterPro" id="IPR030456">
    <property type="entry name" value="TF_fork_head_CS_2"/>
</dbReference>
<dbReference type="InterPro" id="IPR036388">
    <property type="entry name" value="WH-like_DNA-bd_sf"/>
</dbReference>
<dbReference type="InterPro" id="IPR036390">
    <property type="entry name" value="WH_DNA-bd_sf"/>
</dbReference>
<dbReference type="PANTHER" id="PTHR11829">
    <property type="entry name" value="FORKHEAD BOX PROTEIN"/>
    <property type="match status" value="1"/>
</dbReference>
<dbReference type="PANTHER" id="PTHR11829:SF380">
    <property type="entry name" value="PROTEIN FORK HEAD"/>
    <property type="match status" value="1"/>
</dbReference>
<dbReference type="Pfam" id="PF00250">
    <property type="entry name" value="Forkhead"/>
    <property type="match status" value="1"/>
</dbReference>
<dbReference type="Pfam" id="PF08430">
    <property type="entry name" value="Forkhead_N"/>
    <property type="match status" value="1"/>
</dbReference>
<dbReference type="PRINTS" id="PR00053">
    <property type="entry name" value="FORKHEAD"/>
</dbReference>
<dbReference type="SMART" id="SM00339">
    <property type="entry name" value="FH"/>
    <property type="match status" value="1"/>
</dbReference>
<dbReference type="SUPFAM" id="SSF46785">
    <property type="entry name" value="Winged helix' DNA-binding domain"/>
    <property type="match status" value="1"/>
</dbReference>
<dbReference type="PROSITE" id="PS00657">
    <property type="entry name" value="FORK_HEAD_1"/>
    <property type="match status" value="1"/>
</dbReference>
<dbReference type="PROSITE" id="PS00658">
    <property type="entry name" value="FORK_HEAD_2"/>
    <property type="match status" value="1"/>
</dbReference>
<dbReference type="PROSITE" id="PS50039">
    <property type="entry name" value="FORK_HEAD_3"/>
    <property type="match status" value="1"/>
</dbReference>
<evidence type="ECO:0000255" key="1">
    <source>
        <dbReference type="PROSITE-ProRule" id="PRU00089"/>
    </source>
</evidence>
<evidence type="ECO:0000256" key="2">
    <source>
        <dbReference type="SAM" id="MobiDB-lite"/>
    </source>
</evidence>
<evidence type="ECO:0000269" key="3">
    <source>
    </source>
</evidence>
<name>FKH_DROME</name>
<proteinExistence type="evidence at protein level"/>
<accession>P14734</accession>
<accession>Q9VAV0</accession>
<organism>
    <name type="scientific">Drosophila melanogaster</name>
    <name type="common">Fruit fly</name>
    <dbReference type="NCBI Taxonomy" id="7227"/>
    <lineage>
        <taxon>Eukaryota</taxon>
        <taxon>Metazoa</taxon>
        <taxon>Ecdysozoa</taxon>
        <taxon>Arthropoda</taxon>
        <taxon>Hexapoda</taxon>
        <taxon>Insecta</taxon>
        <taxon>Pterygota</taxon>
        <taxon>Neoptera</taxon>
        <taxon>Endopterygota</taxon>
        <taxon>Diptera</taxon>
        <taxon>Brachycera</taxon>
        <taxon>Muscomorpha</taxon>
        <taxon>Ephydroidea</taxon>
        <taxon>Drosophilidae</taxon>
        <taxon>Drosophila</taxon>
        <taxon>Sophophora</taxon>
    </lineage>
</organism>
<feature type="chain" id="PRO_0000091896" description="Protein fork head">
    <location>
        <begin position="1"/>
        <end position="510"/>
    </location>
</feature>
<feature type="DNA-binding region" description="Fork-head" evidence="1">
    <location>
        <begin position="209"/>
        <end position="300"/>
    </location>
</feature>
<feature type="region of interest" description="Disordered" evidence="2">
    <location>
        <begin position="1"/>
        <end position="62"/>
    </location>
</feature>
<feature type="region of interest" description="Disordered" evidence="2">
    <location>
        <begin position="175"/>
        <end position="205"/>
    </location>
</feature>
<feature type="region of interest" description="Disordered" evidence="2">
    <location>
        <begin position="309"/>
        <end position="359"/>
    </location>
</feature>
<feature type="compositionally biased region" description="Gly residues" evidence="2">
    <location>
        <begin position="20"/>
        <end position="39"/>
    </location>
</feature>
<feature type="compositionally biased region" description="Low complexity" evidence="2">
    <location>
        <begin position="47"/>
        <end position="60"/>
    </location>
</feature>
<feature type="compositionally biased region" description="Basic residues" evidence="2">
    <location>
        <begin position="341"/>
        <end position="356"/>
    </location>
</feature>
<feature type="modified residue" description="Phosphoserine" evidence="3">
    <location>
        <position position="187"/>
    </location>
</feature>
<feature type="modified residue" description="Phosphoserine" evidence="3">
    <location>
        <position position="190"/>
    </location>
</feature>
<feature type="modified residue" description="Phosphoserine" evidence="3">
    <location>
        <position position="320"/>
    </location>
</feature>
<feature type="modified residue" description="Phosphoserine" evidence="3">
    <location>
        <position position="322"/>
    </location>
</feature>
<feature type="modified residue" description="Phosphoserine" evidence="3">
    <location>
        <position position="330"/>
    </location>
</feature>